<keyword id="KW-0235">DNA replication</keyword>
<keyword id="KW-0238">DNA-binding</keyword>
<keyword id="KW-0489">Methyltransferase</keyword>
<keyword id="KW-1185">Reference proteome</keyword>
<keyword id="KW-0949">S-adenosyl-L-methionine</keyword>
<keyword id="KW-0808">Transferase</keyword>
<protein>
    <recommendedName>
        <fullName>DNA adenine methylase</fullName>
        <ecNumber>2.1.1.72</ecNumber>
    </recommendedName>
    <alternativeName>
        <fullName>DNA adenine methyltransferase</fullName>
    </alternativeName>
    <alternativeName>
        <fullName>Deoxyadenosyl-methyltransferase</fullName>
    </alternativeName>
    <alternativeName>
        <fullName>M.HindIV</fullName>
    </alternativeName>
    <alternativeName>
        <fullName evidence="3">Orphan methyltransferase M.HindDam</fullName>
        <shortName evidence="3">M.HindDam</shortName>
    </alternativeName>
</protein>
<evidence type="ECO:0000250" key="1"/>
<evidence type="ECO:0000250" key="2">
    <source>
        <dbReference type="UniProtKB" id="P0AEE8"/>
    </source>
</evidence>
<evidence type="ECO:0000303" key="3">
    <source>
    </source>
</evidence>
<evidence type="ECO:0000305" key="4"/>
<accession>P44431</accession>
<dbReference type="EC" id="2.1.1.72"/>
<dbReference type="EMBL" id="L42023">
    <property type="protein sequence ID" value="AAC21877.1"/>
    <property type="molecule type" value="Genomic_DNA"/>
</dbReference>
<dbReference type="PIR" id="H64054">
    <property type="entry name" value="H64054"/>
</dbReference>
<dbReference type="RefSeq" id="NP_438378.1">
    <property type="nucleotide sequence ID" value="NC_000907.1"/>
</dbReference>
<dbReference type="STRING" id="71421.HI_0209"/>
<dbReference type="REBASE" id="1152">
    <property type="entry name" value="M.HindDam"/>
</dbReference>
<dbReference type="REBASE" id="204156">
    <property type="entry name" value="M.Lbr1174ORF79P"/>
</dbReference>
<dbReference type="EnsemblBacteria" id="AAC21877">
    <property type="protein sequence ID" value="AAC21877"/>
    <property type="gene ID" value="HI_0209"/>
</dbReference>
<dbReference type="KEGG" id="hin:HI_0209"/>
<dbReference type="PATRIC" id="fig|71421.8.peg.214"/>
<dbReference type="eggNOG" id="COG0338">
    <property type="taxonomic scope" value="Bacteria"/>
</dbReference>
<dbReference type="HOGENOM" id="CLU_063430_0_1_6"/>
<dbReference type="OrthoDB" id="9805629at2"/>
<dbReference type="PhylomeDB" id="P44431"/>
<dbReference type="BioCyc" id="HINF71421:G1GJ1-220-MONOMER"/>
<dbReference type="Proteomes" id="UP000000579">
    <property type="component" value="Chromosome"/>
</dbReference>
<dbReference type="GO" id="GO:1904047">
    <property type="term" value="F:S-adenosyl-L-methionine binding"/>
    <property type="evidence" value="ECO:0000318"/>
    <property type="project" value="GO_Central"/>
</dbReference>
<dbReference type="GO" id="GO:0043565">
    <property type="term" value="F:sequence-specific DNA binding"/>
    <property type="evidence" value="ECO:0000318"/>
    <property type="project" value="GO_Central"/>
</dbReference>
<dbReference type="GO" id="GO:0009007">
    <property type="term" value="F:site-specific DNA-methyltransferase (adenine-specific) activity"/>
    <property type="evidence" value="ECO:0000318"/>
    <property type="project" value="GO_Central"/>
</dbReference>
<dbReference type="GO" id="GO:0006260">
    <property type="term" value="P:DNA replication"/>
    <property type="evidence" value="ECO:0007669"/>
    <property type="project" value="UniProtKB-KW"/>
</dbReference>
<dbReference type="GO" id="GO:0009307">
    <property type="term" value="P:DNA restriction-modification system"/>
    <property type="evidence" value="ECO:0007669"/>
    <property type="project" value="InterPro"/>
</dbReference>
<dbReference type="GO" id="GO:0032259">
    <property type="term" value="P:methylation"/>
    <property type="evidence" value="ECO:0007669"/>
    <property type="project" value="UniProtKB-KW"/>
</dbReference>
<dbReference type="GO" id="GO:0006298">
    <property type="term" value="P:mismatch repair"/>
    <property type="evidence" value="ECO:0000318"/>
    <property type="project" value="GO_Central"/>
</dbReference>
<dbReference type="FunFam" id="1.10.1020.10:FF:000001">
    <property type="entry name" value="Site-specific DNA-methyltransferase (adenine-specific)"/>
    <property type="match status" value="1"/>
</dbReference>
<dbReference type="Gene3D" id="1.10.1020.10">
    <property type="entry name" value="Adenine-specific Methyltransferase, Domain 2"/>
    <property type="match status" value="1"/>
</dbReference>
<dbReference type="Gene3D" id="3.40.50.150">
    <property type="entry name" value="Vaccinia Virus protein VP39"/>
    <property type="match status" value="1"/>
</dbReference>
<dbReference type="InterPro" id="IPR023095">
    <property type="entry name" value="Ade_MeTrfase_dom_2"/>
</dbReference>
<dbReference type="InterPro" id="IPR002052">
    <property type="entry name" value="DNA_methylase_N6_adenine_CS"/>
</dbReference>
<dbReference type="InterPro" id="IPR012263">
    <property type="entry name" value="M_m6A_EcoRV"/>
</dbReference>
<dbReference type="InterPro" id="IPR012327">
    <property type="entry name" value="MeTrfase_D12"/>
</dbReference>
<dbReference type="InterPro" id="IPR029063">
    <property type="entry name" value="SAM-dependent_MTases_sf"/>
</dbReference>
<dbReference type="NCBIfam" id="TIGR00571">
    <property type="entry name" value="dam"/>
    <property type="match status" value="1"/>
</dbReference>
<dbReference type="PANTHER" id="PTHR30481">
    <property type="entry name" value="DNA ADENINE METHYLASE"/>
    <property type="match status" value="1"/>
</dbReference>
<dbReference type="PANTHER" id="PTHR30481:SF3">
    <property type="entry name" value="DNA ADENINE METHYLASE"/>
    <property type="match status" value="1"/>
</dbReference>
<dbReference type="Pfam" id="PF02086">
    <property type="entry name" value="MethyltransfD12"/>
    <property type="match status" value="1"/>
</dbReference>
<dbReference type="PIRSF" id="PIRSF000398">
    <property type="entry name" value="M_m6A_EcoRV"/>
    <property type="match status" value="1"/>
</dbReference>
<dbReference type="PRINTS" id="PR00505">
    <property type="entry name" value="D12N6MTFRASE"/>
</dbReference>
<dbReference type="SUPFAM" id="SSF53335">
    <property type="entry name" value="S-adenosyl-L-methionine-dependent methyltransferases"/>
    <property type="match status" value="1"/>
</dbReference>
<dbReference type="PROSITE" id="PS00092">
    <property type="entry name" value="N6_MTASE"/>
    <property type="match status" value="1"/>
</dbReference>
<comment type="function">
    <text evidence="2 3">An alpha subtype methylase, recognizes the double-stranded sequence 5'-GATC-3' and methylates A-2 (By similarity) (PubMed:12654995). May be involved in methyl-directed DNA mismatch repair, initiation of chromosome replication and gene expression (By similarity).</text>
</comment>
<comment type="catalytic activity">
    <reaction>
        <text>a 2'-deoxyadenosine in DNA + S-adenosyl-L-methionine = an N(6)-methyl-2'-deoxyadenosine in DNA + S-adenosyl-L-homocysteine + H(+)</text>
        <dbReference type="Rhea" id="RHEA:15197"/>
        <dbReference type="Rhea" id="RHEA-COMP:12418"/>
        <dbReference type="Rhea" id="RHEA-COMP:12419"/>
        <dbReference type="ChEBI" id="CHEBI:15378"/>
        <dbReference type="ChEBI" id="CHEBI:57856"/>
        <dbReference type="ChEBI" id="CHEBI:59789"/>
        <dbReference type="ChEBI" id="CHEBI:90615"/>
        <dbReference type="ChEBI" id="CHEBI:90616"/>
        <dbReference type="EC" id="2.1.1.72"/>
    </reaction>
</comment>
<comment type="similarity">
    <text evidence="4">Belongs to the N(4)/N(6)-methyltransferase family.</text>
</comment>
<feature type="chain" id="PRO_0000087996" description="DNA adenine methylase">
    <location>
        <begin position="1"/>
        <end position="286"/>
    </location>
</feature>
<feature type="binding site" evidence="1">
    <location>
        <position position="21"/>
    </location>
    <ligand>
        <name>S-adenosyl-L-methionine</name>
        <dbReference type="ChEBI" id="CHEBI:59789"/>
    </ligand>
</feature>
<feature type="binding site" evidence="1">
    <location>
        <position position="25"/>
    </location>
    <ligand>
        <name>S-adenosyl-L-methionine</name>
        <dbReference type="ChEBI" id="CHEBI:59789"/>
    </ligand>
</feature>
<feature type="binding site" evidence="1">
    <location>
        <position position="66"/>
    </location>
    <ligand>
        <name>S-adenosyl-L-methionine</name>
        <dbReference type="ChEBI" id="CHEBI:59789"/>
    </ligand>
</feature>
<feature type="binding site" evidence="1">
    <location>
        <position position="194"/>
    </location>
    <ligand>
        <name>S-adenosyl-L-methionine</name>
        <dbReference type="ChEBI" id="CHEBI:59789"/>
    </ligand>
</feature>
<sequence length="286" mass="33219">MLRPKKQSLKPKLKHRPFLKWAGGKFRLTDEINKAFPNKKNCLIEPFVGAGAVFLNSNFERYILADINPDLINLFNIVKXNVDGYIEDCKPIFFADDANTPDYYYAKRRQFNASTEPFERSIIFLYLNRFGFNGLCRYNSKNEFNVPFGAYKTHYFPEDELRYFAHKAQSAVFLCCDFQKTFEFADKDSVIYCDPPYAPLQQETNFTGYAGNEFGLAQQRALADLAKSIQKEKQISILISNHDTKFTREIYNGAKFKRVKVQRSISQNPEKRVKVKELIAIFGARK</sequence>
<reference key="1">
    <citation type="journal article" date="1995" name="Science">
        <title>Whole-genome random sequencing and assembly of Haemophilus influenzae Rd.</title>
        <authorList>
            <person name="Fleischmann R.D."/>
            <person name="Adams M.D."/>
            <person name="White O."/>
            <person name="Clayton R.A."/>
            <person name="Kirkness E.F."/>
            <person name="Kerlavage A.R."/>
            <person name="Bult C.J."/>
            <person name="Tomb J.-F."/>
            <person name="Dougherty B.A."/>
            <person name="Merrick J.M."/>
            <person name="McKenney K."/>
            <person name="Sutton G.G."/>
            <person name="FitzHugh W."/>
            <person name="Fields C.A."/>
            <person name="Gocayne J.D."/>
            <person name="Scott J.D."/>
            <person name="Shirley R."/>
            <person name="Liu L.-I."/>
            <person name="Glodek A."/>
            <person name="Kelley J.M."/>
            <person name="Weidman J.F."/>
            <person name="Phillips C.A."/>
            <person name="Spriggs T."/>
            <person name="Hedblom E."/>
            <person name="Cotton M.D."/>
            <person name="Utterback T.R."/>
            <person name="Hanna M.C."/>
            <person name="Nguyen D.T."/>
            <person name="Saudek D.M."/>
            <person name="Brandon R.C."/>
            <person name="Fine L.D."/>
            <person name="Fritchman J.L."/>
            <person name="Fuhrmann J.L."/>
            <person name="Geoghagen N.S.M."/>
            <person name="Gnehm C.L."/>
            <person name="McDonald L.A."/>
            <person name="Small K.V."/>
            <person name="Fraser C.M."/>
            <person name="Smith H.O."/>
            <person name="Venter J.C."/>
        </authorList>
    </citation>
    <scope>NUCLEOTIDE SEQUENCE [LARGE SCALE GENOMIC DNA]</scope>
    <source>
        <strain>ATCC 51907 / DSM 11121 / KW20 / Rd</strain>
    </source>
</reference>
<reference key="2">
    <citation type="journal article" date="2003" name="Nucleic Acids Res.">
        <title>A nomenclature for restriction enzymes, DNA methyltransferases, homing endonucleases and their genes.</title>
        <authorList>
            <person name="Roberts R.J."/>
            <person name="Belfort M."/>
            <person name="Bestor T."/>
            <person name="Bhagwat A.S."/>
            <person name="Bickle T.A."/>
            <person name="Bitinaite J."/>
            <person name="Blumenthal R.M."/>
            <person name="Degtyarev S.K."/>
            <person name="Dryden D.T."/>
            <person name="Dybvig K."/>
            <person name="Firman K."/>
            <person name="Gromova E.S."/>
            <person name="Gumport R.I."/>
            <person name="Halford S.E."/>
            <person name="Hattman S."/>
            <person name="Heitman J."/>
            <person name="Hornby D.P."/>
            <person name="Janulaitis A."/>
            <person name="Jeltsch A."/>
            <person name="Josephsen J."/>
            <person name="Kiss A."/>
            <person name="Klaenhammer T.R."/>
            <person name="Kobayashi I."/>
            <person name="Kong H."/>
            <person name="Krueger D.H."/>
            <person name="Lacks S."/>
            <person name="Marinus M.G."/>
            <person name="Miyahara M."/>
            <person name="Morgan R.D."/>
            <person name="Murray N.E."/>
            <person name="Nagaraja V."/>
            <person name="Piekarowicz A."/>
            <person name="Pingoud A."/>
            <person name="Raleigh E."/>
            <person name="Rao D.N."/>
            <person name="Reich N."/>
            <person name="Repin V.E."/>
            <person name="Selker E.U."/>
            <person name="Shaw P.C."/>
            <person name="Stein D.C."/>
            <person name="Stoddard B.L."/>
            <person name="Szybalski W."/>
            <person name="Trautner T.A."/>
            <person name="Van Etten J.L."/>
            <person name="Vitor J.M."/>
            <person name="Wilson G.G."/>
            <person name="Xu S.Y."/>
        </authorList>
    </citation>
    <scope>NOMENCLATURE</scope>
    <scope>SUBTYPE</scope>
</reference>
<name>DMA_HAEIN</name>
<organism>
    <name type="scientific">Haemophilus influenzae (strain ATCC 51907 / DSM 11121 / KW20 / Rd)</name>
    <dbReference type="NCBI Taxonomy" id="71421"/>
    <lineage>
        <taxon>Bacteria</taxon>
        <taxon>Pseudomonadati</taxon>
        <taxon>Pseudomonadota</taxon>
        <taxon>Gammaproteobacteria</taxon>
        <taxon>Pasteurellales</taxon>
        <taxon>Pasteurellaceae</taxon>
        <taxon>Haemophilus</taxon>
    </lineage>
</organism>
<gene>
    <name type="primary">dam</name>
    <name type="synonym">hindIVM</name>
    <name type="ordered locus">HI_0209</name>
</gene>
<proteinExistence type="inferred from homology"/>